<proteinExistence type="evidence at protein level"/>
<evidence type="ECO:0000255" key="1">
    <source>
        <dbReference type="HAMAP-Rule" id="MF_00809"/>
    </source>
</evidence>
<evidence type="ECO:0000255" key="2">
    <source>
        <dbReference type="PROSITE-ProRule" id="PRU00584"/>
    </source>
</evidence>
<evidence type="ECO:0000269" key="3">
    <source>
    </source>
</evidence>
<evidence type="ECO:0000269" key="4">
    <source>
    </source>
</evidence>
<evidence type="ECO:0000269" key="5">
    <source>
    </source>
</evidence>
<evidence type="ECO:0000303" key="6">
    <source>
    </source>
</evidence>
<evidence type="ECO:0000305" key="7"/>
<evidence type="ECO:0007744" key="8">
    <source>
        <dbReference type="PDB" id="1UA4"/>
    </source>
</evidence>
<evidence type="ECO:0007829" key="9">
    <source>
        <dbReference type="PDB" id="1UA4"/>
    </source>
</evidence>
<sequence length="455" mass="51266">MPTWEELYKNAIEKAIKSVPKVKGVLLGYNTNIDAIKYLDSKDLEERIIKAGKEEVIKYSEELPDKINTVSQLLGSILWSIRRGKAAELFVESCPVRFYMKRWGWNELRMGGQAGIMANLLGGVYGVPVIVHVPQLSRLQANLFLDGPIYVPTLENGEVKLIHPKEFSGDEENCIHYIYEFPRGFRVFEFEAPRENRFIGSADDYNTTLFIREEFRESFSEVIKNVQLAILSGLQALTKENYKEPFEIVKSNLEVLNEREIPVHLEFAFTPDEKVREEILNVLGMFYSVGLNEVELASIMEILGEKKLAKELLAHDPVDPIAVTEAMLKLAKKTGVKRIHFHTYGYYLALTEYKGEHVRDALLFAALAAAAKAMKGNITSLEEIREATSVPVNEKATQVEEKLRAEYGIKEGIGEVEGYQIAFIPTKIVAKPKSTVGIGDTISSSAFIGEFSFTL</sequence>
<reference key="1">
    <citation type="journal article" date="1999" name="J. Biol. Chem.">
        <title>Molecular and biochemical characterization of the ADP-dependent phosphofructokinase from the hyperthermophilic archaeon Pyrococcus furiosus.</title>
        <authorList>
            <person name="Tuininga J.E."/>
            <person name="Verhees C.H."/>
            <person name="van der Oost J."/>
            <person name="Kengen S.W.M."/>
            <person name="Stams A.J.M."/>
            <person name="de Vos W.M."/>
        </authorList>
    </citation>
    <scope>NUCLEOTIDE SEQUENCE [GENOMIC DNA]</scope>
    <source>
        <strain>ATCC 43587 / DSM 3638 / JCM 8422 / Vc1</strain>
    </source>
</reference>
<reference key="2">
    <citation type="journal article" date="2000" name="J. Biochem.">
        <title>Biochemical characterization, cloning, and sequencing of ADP-dependent (AMP-forming) glucokinase from two hyperthermophilic archaea, Pyrococcus furiosus and Thermococcus litoralis.</title>
        <authorList>
            <person name="Koga S."/>
            <person name="Yoshioka I."/>
            <person name="Sakuraba H."/>
            <person name="Takahashi M."/>
            <person name="Sakasegawa S."/>
            <person name="Shimizu S."/>
            <person name="Ohshima T."/>
        </authorList>
    </citation>
    <scope>NUCLEOTIDE SEQUENCE [GENOMIC DNA]</scope>
    <scope>PROTEIN SEQUENCE OF 2-40</scope>
    <scope>FUNCTION</scope>
    <scope>CATALYTIC ACTIVITY</scope>
    <scope>COFACTOR</scope>
    <scope>BIOPHYSICOCHEMICAL PROPERTIES</scope>
    <scope>SUBUNIT</scope>
    <source>
        <strain>ATCC 43587 / DSM 3638 / JCM 8422 / Vc1</strain>
    </source>
</reference>
<reference key="3">
    <citation type="journal article" date="1999" name="Genetics">
        <title>Divergence of the hyperthermophilic archaea Pyrococcus furiosus and P. horikoshii inferred from complete genomic sequences.</title>
        <authorList>
            <person name="Maeder D.L."/>
            <person name="Weiss R.B."/>
            <person name="Dunn D.M."/>
            <person name="Cherry J.L."/>
            <person name="Gonzalez J.M."/>
            <person name="DiRuggiero J."/>
            <person name="Robb F.T."/>
        </authorList>
    </citation>
    <scope>NUCLEOTIDE SEQUENCE [LARGE SCALE GENOMIC DNA]</scope>
    <source>
        <strain>ATCC 43587 / DSM 3638 / JCM 8422 / Vc1</strain>
    </source>
</reference>
<reference key="4">
    <citation type="journal article" date="1995" name="J. Biol. Chem.">
        <title>Purification and characterization of a novel ADP-dependent glucokinase from the hyperthermophilic archaeon Pyrococcus furiosus.</title>
        <authorList>
            <person name="Kengen S.W.M."/>
            <person name="Tuininga J.E."/>
            <person name="de Bok F.A.M."/>
            <person name="Stams A.J.M."/>
            <person name="de Vos W.M."/>
        </authorList>
    </citation>
    <scope>PROTEIN SEQUENCE OF 2-11</scope>
    <scope>FUNCTION</scope>
    <scope>CATALYTIC ACTIVITY</scope>
    <scope>BIOPHYSICOCHEMICAL PROPERTIES</scope>
    <scope>COFACTOR</scope>
    <source>
        <strain>ATCC 43587 / DSM 3638 / JCM 8422 / Vc1</strain>
    </source>
</reference>
<reference evidence="8" key="5">
    <citation type="journal article" date="2003" name="J. Mol. Biol.">
        <title>Crystal structure of an ADP-dependent glucokinase from Pyrococcus furiosus: implications for a sugar-induced conformational change in ADP-dependent kinase.</title>
        <authorList>
            <person name="Ito S."/>
            <person name="Fushinobu S."/>
            <person name="Jeong J.-J."/>
            <person name="Yoshioka I."/>
            <person name="Koga S."/>
            <person name="Shoun H."/>
            <person name="Wakagi T."/>
        </authorList>
    </citation>
    <scope>X-RAY CRYSTALLOGRAPHY (1.9 ANGSTROMS) IN COMPLEX WITH AMP AND GLUCOSE</scope>
    <scope>SUBUNIT</scope>
</reference>
<gene>
    <name evidence="1" type="primary">glkA</name>
    <name type="ordered locus">PF0312</name>
</gene>
<dbReference type="EC" id="2.7.1.-" evidence="3"/>
<dbReference type="EC" id="2.7.1.147" evidence="1 3 5"/>
<dbReference type="EMBL" id="AF127910">
    <property type="protein sequence ID" value="AAD48401.1"/>
    <property type="molecule type" value="Genomic_DNA"/>
</dbReference>
<dbReference type="EMBL" id="E14588">
    <property type="status" value="NOT_ANNOTATED_CDS"/>
    <property type="molecule type" value="Unassigned_DNA"/>
</dbReference>
<dbReference type="EMBL" id="AE009950">
    <property type="protein sequence ID" value="AAL80436.1"/>
    <property type="molecule type" value="Genomic_DNA"/>
</dbReference>
<dbReference type="PIR" id="JC7550">
    <property type="entry name" value="JC7550"/>
</dbReference>
<dbReference type="RefSeq" id="WP_011011427.1">
    <property type="nucleotide sequence ID" value="NZ_CP023154.1"/>
</dbReference>
<dbReference type="PDB" id="1UA4">
    <property type="method" value="X-ray"/>
    <property type="resolution" value="1.90 A"/>
    <property type="chains" value="A=1-455"/>
</dbReference>
<dbReference type="PDBsum" id="1UA4"/>
<dbReference type="SMR" id="Q9V2Z6"/>
<dbReference type="STRING" id="186497.PF0312"/>
<dbReference type="PaxDb" id="186497-PF0312"/>
<dbReference type="KEGG" id="pfu:PF0312"/>
<dbReference type="PATRIC" id="fig|186497.12.peg.327"/>
<dbReference type="eggNOG" id="arCOG03370">
    <property type="taxonomic scope" value="Archaea"/>
</dbReference>
<dbReference type="HOGENOM" id="CLU_046643_0_0_2"/>
<dbReference type="OrthoDB" id="124916at2157"/>
<dbReference type="PhylomeDB" id="Q9V2Z6"/>
<dbReference type="BioCyc" id="MetaCyc:MONOMER-11804"/>
<dbReference type="BRENDA" id="2.7.1.147">
    <property type="organism ID" value="5243"/>
</dbReference>
<dbReference type="SABIO-RK" id="Q9V2Z6"/>
<dbReference type="UniPathway" id="UPA00109"/>
<dbReference type="EvolutionaryTrace" id="Q9V2Z6"/>
<dbReference type="PRO" id="PR:Q9V2Z6"/>
<dbReference type="Proteomes" id="UP000001013">
    <property type="component" value="Chromosome"/>
</dbReference>
<dbReference type="GO" id="GO:0005737">
    <property type="term" value="C:cytoplasm"/>
    <property type="evidence" value="ECO:0007669"/>
    <property type="project" value="UniProtKB-SubCell"/>
</dbReference>
<dbReference type="GO" id="GO:0043843">
    <property type="term" value="F:ADP-specific glucokinase activity"/>
    <property type="evidence" value="ECO:0007669"/>
    <property type="project" value="UniProtKB-EC"/>
</dbReference>
<dbReference type="GO" id="GO:0004340">
    <property type="term" value="F:glucokinase activity"/>
    <property type="evidence" value="ECO:0007669"/>
    <property type="project" value="UniProtKB-UniRule"/>
</dbReference>
<dbReference type="GO" id="GO:0000287">
    <property type="term" value="F:magnesium ion binding"/>
    <property type="evidence" value="ECO:0007669"/>
    <property type="project" value="InterPro"/>
</dbReference>
<dbReference type="GO" id="GO:0006006">
    <property type="term" value="P:glucose metabolic process"/>
    <property type="evidence" value="ECO:0007669"/>
    <property type="project" value="UniProtKB-KW"/>
</dbReference>
<dbReference type="GO" id="GO:0006096">
    <property type="term" value="P:glycolytic process"/>
    <property type="evidence" value="ECO:0007669"/>
    <property type="project" value="UniProtKB-UniRule"/>
</dbReference>
<dbReference type="CDD" id="cd01938">
    <property type="entry name" value="ADPGK_ADPPFK"/>
    <property type="match status" value="1"/>
</dbReference>
<dbReference type="Gene3D" id="3.30.1110.20">
    <property type="match status" value="1"/>
</dbReference>
<dbReference type="Gene3D" id="3.40.1190.20">
    <property type="match status" value="1"/>
</dbReference>
<dbReference type="HAMAP" id="MF_00809">
    <property type="entry name" value="ADP_glucokinase"/>
    <property type="match status" value="1"/>
</dbReference>
<dbReference type="InterPro" id="IPR007666">
    <property type="entry name" value="ADP_PFK/GK"/>
</dbReference>
<dbReference type="InterPro" id="IPR015990">
    <property type="entry name" value="ADP_PFK/GK_arc"/>
</dbReference>
<dbReference type="InterPro" id="IPR031299">
    <property type="entry name" value="GlkA"/>
</dbReference>
<dbReference type="InterPro" id="IPR029056">
    <property type="entry name" value="Ribokinase-like"/>
</dbReference>
<dbReference type="NCBIfam" id="NF010641">
    <property type="entry name" value="PRK14038.1"/>
    <property type="match status" value="1"/>
</dbReference>
<dbReference type="PANTHER" id="PTHR21208">
    <property type="entry name" value="ADP-DEPENDENT GLUCOKINASE"/>
    <property type="match status" value="1"/>
</dbReference>
<dbReference type="PANTHER" id="PTHR21208:SF1">
    <property type="entry name" value="ADP-DEPENDENT GLUCOKINASE"/>
    <property type="match status" value="1"/>
</dbReference>
<dbReference type="Pfam" id="PF04587">
    <property type="entry name" value="ADP_PFK_GK"/>
    <property type="match status" value="1"/>
</dbReference>
<dbReference type="PIRSF" id="PIRSF015883">
    <property type="entry name" value="ADP-Pfk_glckin"/>
    <property type="match status" value="1"/>
</dbReference>
<dbReference type="SUPFAM" id="SSF53613">
    <property type="entry name" value="Ribokinase-like"/>
    <property type="match status" value="1"/>
</dbReference>
<dbReference type="PROSITE" id="PS51255">
    <property type="entry name" value="ADPK"/>
    <property type="match status" value="1"/>
</dbReference>
<keyword id="KW-0002">3D-structure</keyword>
<keyword id="KW-0119">Carbohydrate metabolism</keyword>
<keyword id="KW-0963">Cytoplasm</keyword>
<keyword id="KW-0903">Direct protein sequencing</keyword>
<keyword id="KW-0313">Glucose metabolism</keyword>
<keyword id="KW-0324">Glycolysis</keyword>
<keyword id="KW-0418">Kinase</keyword>
<keyword id="KW-0460">Magnesium</keyword>
<keyword id="KW-0479">Metal-binding</keyword>
<keyword id="KW-1185">Reference proteome</keyword>
<keyword id="KW-0808">Transferase</keyword>
<name>GLKA_PYRFU</name>
<protein>
    <recommendedName>
        <fullName evidence="1 7">ADP-dependent glucose/glucosamine kinase</fullName>
        <ecNumber evidence="3">2.7.1.-</ecNumber>
        <ecNumber evidence="1 3 5">2.7.1.147</ecNumber>
    </recommendedName>
    <alternativeName>
        <fullName evidence="1 6">ADP-dependent glucokinase</fullName>
        <shortName evidence="1 6">ADP-GK</shortName>
        <shortName evidence="1">ADPGK</shortName>
    </alternativeName>
    <alternativeName>
        <fullName evidence="1">Glucosamine kinase</fullName>
        <shortName evidence="1">GlcN kinase</shortName>
    </alternativeName>
</protein>
<comment type="function">
    <text evidence="3 5">Catalyzes the ADP-dependent phosphorylation of D-glucose to D-glucose 6-phosphate and glucosamine to glucosamine 6-phosphate. Can also use CDP as the phosphoryl group donor and D-1,5-anhydroglucitol as the phosphoryl group acceptor.</text>
</comment>
<comment type="catalytic activity">
    <reaction evidence="1 3 5">
        <text>D-glucose + ADP = D-glucose 6-phosphate + AMP + H(+)</text>
        <dbReference type="Rhea" id="RHEA:11460"/>
        <dbReference type="ChEBI" id="CHEBI:4167"/>
        <dbReference type="ChEBI" id="CHEBI:15378"/>
        <dbReference type="ChEBI" id="CHEBI:61548"/>
        <dbReference type="ChEBI" id="CHEBI:456215"/>
        <dbReference type="ChEBI" id="CHEBI:456216"/>
        <dbReference type="EC" id="2.7.1.147"/>
    </reaction>
</comment>
<comment type="catalytic activity">
    <reaction evidence="1 3">
        <text>D-glucosamine + ADP = D-glucosamine 6-phosphate + AMP + H(+)</text>
        <dbReference type="Rhea" id="RHEA:62084"/>
        <dbReference type="ChEBI" id="CHEBI:15378"/>
        <dbReference type="ChEBI" id="CHEBI:58723"/>
        <dbReference type="ChEBI" id="CHEBI:58725"/>
        <dbReference type="ChEBI" id="CHEBI:456215"/>
        <dbReference type="ChEBI" id="CHEBI:456216"/>
    </reaction>
</comment>
<comment type="cofactor">
    <cofactor evidence="1 3 5">
        <name>Mg(2+)</name>
        <dbReference type="ChEBI" id="CHEBI:18420"/>
    </cofactor>
    <text evidence="2">Binds 1 Mg(2+) ion per subunit.</text>
</comment>
<comment type="biophysicochemical properties">
    <kinetics>
        <KM evidence="3 5">0.64 mM for D-glucose (at 37 degrees Celsius)</KM>
        <KM evidence="3 5">0.73 mM for D-glucose (at 50 degrees Celsius)</KM>
        <KM evidence="3 5">0.54 mM for D-glucosamine (at 37 degrees Celsius)</KM>
        <KM evidence="3 5">8.3 mM for D-1,5-anhydroglucitol (at 37 degrees Celsius)</KM>
        <KM evidence="3 5">0.07 mM for ADP (at 37 degrees Celsius)</KM>
        <KM evidence="3 5">0.033 mM for ADP (at 50 degrees Celsius)</KM>
        <KM evidence="3 5">0.83 mM for CDP (at 37 degrees Celsius)</KM>
        <KM evidence="3 5">0.041 mM for magnesium ions (at 37 degrees Celsius)</KM>
        <Vmax evidence="3 5">249.0 umol/min/mg enzyme toward glucose (at 50 degrees Celsius)</Vmax>
        <Vmax evidence="3 5">194.0 umol/min/mg enzyme toward ADP (at 50 degrees Celsius)</Vmax>
        <Vmax evidence="3 5">160.0 umol/min/mg enzyme toward glucose (at 37 degrees Celsius)</Vmax>
    </kinetics>
    <phDependence>
        <text evidence="3 5">Optimum pH is about 7.5.</text>
    </phDependence>
    <temperatureDependence>
        <text evidence="3 5">Optimum temperature is 105 degrees Celsius. Activity observed at 100 degrees Celsius is about 8 times that at 37 degrees Celsius. Thermostable up to 95 degrees Celsius. Retains full activity after heating at 90 degrees Celsius for 10 minutes and more than 95% of the full activity at 100 degrees Celsius for 10 minutes. Has a half-life of 220 minutes at 100 degrees Celsius. Inactive after heating at 110 degrees Celsius for 30 minutes.</text>
    </temperatureDependence>
</comment>
<comment type="pathway">
    <text evidence="1">Carbohydrate degradation; glycolysis.</text>
</comment>
<comment type="subunit">
    <text evidence="3 4">Homodimer.</text>
</comment>
<comment type="subcellular location">
    <subcellularLocation>
        <location evidence="1">Cytoplasm</location>
    </subcellularLocation>
</comment>
<comment type="similarity">
    <text evidence="1 7">Belongs to the ADP-dependent glucokinase family.</text>
</comment>
<accession>Q9V2Z6</accession>
<accession>Q7LX13</accession>
<organism>
    <name type="scientific">Pyrococcus furiosus (strain ATCC 43587 / DSM 3638 / JCM 8422 / Vc1)</name>
    <dbReference type="NCBI Taxonomy" id="186497"/>
    <lineage>
        <taxon>Archaea</taxon>
        <taxon>Methanobacteriati</taxon>
        <taxon>Methanobacteriota</taxon>
        <taxon>Thermococci</taxon>
        <taxon>Thermococcales</taxon>
        <taxon>Thermococcaceae</taxon>
        <taxon>Pyrococcus</taxon>
    </lineage>
</organism>
<feature type="initiator methionine" description="Removed" evidence="3 5">
    <location>
        <position position="1"/>
    </location>
</feature>
<feature type="chain" id="PRO_0000184772" description="ADP-dependent glucose/glucosamine kinase">
    <location>
        <begin position="2"/>
        <end position="455"/>
    </location>
</feature>
<feature type="domain" description="ADPK" evidence="2">
    <location>
        <begin position="2"/>
        <end position="455"/>
    </location>
</feature>
<feature type="active site" description="Proton acceptor" evidence="2">
    <location>
        <position position="440"/>
    </location>
</feature>
<feature type="binding site" evidence="1 4 8">
    <location>
        <position position="34"/>
    </location>
    <ligand>
        <name>D-glucose</name>
        <dbReference type="ChEBI" id="CHEBI:4167"/>
    </ligand>
</feature>
<feature type="binding site" evidence="1 4 8">
    <location>
        <position position="88"/>
    </location>
    <ligand>
        <name>D-glucose</name>
        <dbReference type="ChEBI" id="CHEBI:4167"/>
    </ligand>
</feature>
<feature type="binding site" evidence="1 4 8">
    <location>
        <begin position="112"/>
        <end position="113"/>
    </location>
    <ligand>
        <name>D-glucose</name>
        <dbReference type="ChEBI" id="CHEBI:4167"/>
    </ligand>
</feature>
<feature type="binding site" evidence="1 4 8">
    <location>
        <position position="176"/>
    </location>
    <ligand>
        <name>D-glucose</name>
        <dbReference type="ChEBI" id="CHEBI:4167"/>
    </ligand>
</feature>
<feature type="binding site" evidence="4 8">
    <location>
        <position position="195"/>
    </location>
    <ligand>
        <name>ADP</name>
        <dbReference type="ChEBI" id="CHEBI:456216"/>
    </ligand>
</feature>
<feature type="binding site" evidence="2">
    <location>
        <position position="266"/>
    </location>
    <ligand>
        <name>Mg(2+)</name>
        <dbReference type="ChEBI" id="CHEBI:18420"/>
    </ligand>
</feature>
<feature type="binding site" evidence="1 4 8">
    <location>
        <position position="292"/>
    </location>
    <ligand>
        <name>ADP</name>
        <dbReference type="ChEBI" id="CHEBI:456216"/>
    </ligand>
</feature>
<feature type="binding site" evidence="2">
    <location>
        <position position="295"/>
    </location>
    <ligand>
        <name>Mg(2+)</name>
        <dbReference type="ChEBI" id="CHEBI:18420"/>
    </ligand>
</feature>
<feature type="binding site" evidence="1 4 8">
    <location>
        <begin position="342"/>
        <end position="343"/>
    </location>
    <ligand>
        <name>ADP</name>
        <dbReference type="ChEBI" id="CHEBI:456216"/>
    </ligand>
</feature>
<feature type="binding site" evidence="1 4 8">
    <location>
        <position position="429"/>
    </location>
    <ligand>
        <name>ADP</name>
        <dbReference type="ChEBI" id="CHEBI:456216"/>
    </ligand>
</feature>
<feature type="binding site" evidence="1 4 8">
    <location>
        <position position="439"/>
    </location>
    <ligand>
        <name>ADP</name>
        <dbReference type="ChEBI" id="CHEBI:456216"/>
    </ligand>
</feature>
<feature type="binding site" evidence="1 4 8">
    <location>
        <position position="440"/>
    </location>
    <ligand>
        <name>D-glucose</name>
        <dbReference type="ChEBI" id="CHEBI:4167"/>
    </ligand>
</feature>
<feature type="binding site" evidence="2">
    <location>
        <position position="440"/>
    </location>
    <ligand>
        <name>Mg(2+)</name>
        <dbReference type="ChEBI" id="CHEBI:18420"/>
    </ligand>
</feature>
<feature type="helix" evidence="9">
    <location>
        <begin position="4"/>
        <end position="18"/>
    </location>
</feature>
<feature type="helix" evidence="9">
    <location>
        <begin position="19"/>
        <end position="21"/>
    </location>
</feature>
<feature type="strand" evidence="9">
    <location>
        <begin position="25"/>
        <end position="29"/>
    </location>
</feature>
<feature type="strand" evidence="9">
    <location>
        <begin position="32"/>
        <end position="38"/>
    </location>
</feature>
<feature type="helix" evidence="9">
    <location>
        <begin position="41"/>
        <end position="51"/>
    </location>
</feature>
<feature type="helix" evidence="9">
    <location>
        <begin position="53"/>
        <end position="61"/>
    </location>
</feature>
<feature type="strand" evidence="9">
    <location>
        <begin position="65"/>
        <end position="67"/>
    </location>
</feature>
<feature type="helix" evidence="9">
    <location>
        <begin position="70"/>
        <end position="83"/>
    </location>
</feature>
<feature type="strand" evidence="9">
    <location>
        <begin position="87"/>
        <end position="91"/>
    </location>
</feature>
<feature type="helix" evidence="9">
    <location>
        <begin position="94"/>
        <end position="103"/>
    </location>
</feature>
<feature type="strand" evidence="9">
    <location>
        <begin position="106"/>
        <end position="112"/>
    </location>
</feature>
<feature type="helix" evidence="9">
    <location>
        <begin position="113"/>
        <end position="121"/>
    </location>
</feature>
<feature type="turn" evidence="9">
    <location>
        <begin position="122"/>
        <end position="125"/>
    </location>
</feature>
<feature type="strand" evidence="9">
    <location>
        <begin position="129"/>
        <end position="131"/>
    </location>
</feature>
<feature type="helix" evidence="9">
    <location>
        <begin position="138"/>
        <end position="141"/>
    </location>
</feature>
<feature type="strand" evidence="9">
    <location>
        <begin position="146"/>
        <end position="155"/>
    </location>
</feature>
<feature type="strand" evidence="9">
    <location>
        <begin position="158"/>
        <end position="162"/>
    </location>
</feature>
<feature type="helix" evidence="9">
    <location>
        <begin position="164"/>
        <end position="166"/>
    </location>
</feature>
<feature type="strand" evidence="9">
    <location>
        <begin position="175"/>
        <end position="181"/>
    </location>
</feature>
<feature type="strand" evidence="9">
    <location>
        <begin position="196"/>
        <end position="201"/>
    </location>
</feature>
<feature type="helix" evidence="9">
    <location>
        <begin position="206"/>
        <end position="208"/>
    </location>
</feature>
<feature type="helix" evidence="9">
    <location>
        <begin position="213"/>
        <end position="215"/>
    </location>
</feature>
<feature type="helix" evidence="9">
    <location>
        <begin position="219"/>
        <end position="222"/>
    </location>
</feature>
<feature type="helix" evidence="9">
    <location>
        <begin position="223"/>
        <end position="225"/>
    </location>
</feature>
<feature type="strand" evidence="9">
    <location>
        <begin position="227"/>
        <end position="231"/>
    </location>
</feature>
<feature type="helix" evidence="9">
    <location>
        <begin position="234"/>
        <end position="236"/>
    </location>
</feature>
<feature type="turn" evidence="9">
    <location>
        <begin position="239"/>
        <end position="241"/>
    </location>
</feature>
<feature type="helix" evidence="9">
    <location>
        <begin position="243"/>
        <end position="258"/>
    </location>
</feature>
<feature type="strand" evidence="9">
    <location>
        <begin position="263"/>
        <end position="266"/>
    </location>
</feature>
<feature type="helix" evidence="9">
    <location>
        <begin position="273"/>
        <end position="282"/>
    </location>
</feature>
<feature type="helix" evidence="9">
    <location>
        <begin position="283"/>
        <end position="285"/>
    </location>
</feature>
<feature type="strand" evidence="9">
    <location>
        <begin position="287"/>
        <end position="291"/>
    </location>
</feature>
<feature type="helix" evidence="9">
    <location>
        <begin position="293"/>
        <end position="302"/>
    </location>
</feature>
<feature type="helix" evidence="9">
    <location>
        <begin position="306"/>
        <end position="311"/>
    </location>
</feature>
<feature type="strand" evidence="9">
    <location>
        <begin position="314"/>
        <end position="317"/>
    </location>
</feature>
<feature type="helix" evidence="9">
    <location>
        <begin position="320"/>
        <end position="334"/>
    </location>
</feature>
<feature type="strand" evidence="9">
    <location>
        <begin position="337"/>
        <end position="342"/>
    </location>
</feature>
<feature type="strand" evidence="9">
    <location>
        <begin position="344"/>
        <end position="353"/>
    </location>
</feature>
<feature type="helix" evidence="9">
    <location>
        <begin position="356"/>
        <end position="375"/>
    </location>
</feature>
<feature type="helix" evidence="9">
    <location>
        <begin position="381"/>
        <end position="386"/>
    </location>
</feature>
<feature type="helix" evidence="9">
    <location>
        <begin position="387"/>
        <end position="389"/>
    </location>
</feature>
<feature type="helix" evidence="9">
    <location>
        <begin position="396"/>
        <end position="407"/>
    </location>
</feature>
<feature type="strand" evidence="9">
    <location>
        <begin position="413"/>
        <end position="416"/>
    </location>
</feature>
<feature type="strand" evidence="9">
    <location>
        <begin position="419"/>
        <end position="425"/>
    </location>
</feature>
<feature type="helix" evidence="9">
    <location>
        <begin position="438"/>
        <end position="452"/>
    </location>
</feature>